<protein>
    <recommendedName>
        <fullName evidence="1">Small ribosomal subunit protein bS6</fullName>
    </recommendedName>
    <alternativeName>
        <fullName evidence="2">30S ribosomal protein S6</fullName>
    </alternativeName>
</protein>
<proteinExistence type="inferred from homology"/>
<organism>
    <name type="scientific">Vibrio cholerae serotype O1 (strain ATCC 39541 / Classical Ogawa 395 / O395)</name>
    <dbReference type="NCBI Taxonomy" id="345073"/>
    <lineage>
        <taxon>Bacteria</taxon>
        <taxon>Pseudomonadati</taxon>
        <taxon>Pseudomonadota</taxon>
        <taxon>Gammaproteobacteria</taxon>
        <taxon>Vibrionales</taxon>
        <taxon>Vibrionaceae</taxon>
        <taxon>Vibrio</taxon>
    </lineage>
</organism>
<reference key="1">
    <citation type="submission" date="2007-03" db="EMBL/GenBank/DDBJ databases">
        <authorList>
            <person name="Heidelberg J."/>
        </authorList>
    </citation>
    <scope>NUCLEOTIDE SEQUENCE [LARGE SCALE GENOMIC DNA]</scope>
    <source>
        <strain>ATCC 39541 / Classical Ogawa 395 / O395</strain>
    </source>
</reference>
<reference key="2">
    <citation type="journal article" date="2008" name="PLoS ONE">
        <title>A recalibrated molecular clock and independent origins for the cholera pandemic clones.</title>
        <authorList>
            <person name="Feng L."/>
            <person name="Reeves P.R."/>
            <person name="Lan R."/>
            <person name="Ren Y."/>
            <person name="Gao C."/>
            <person name="Zhou Z."/>
            <person name="Ren Y."/>
            <person name="Cheng J."/>
            <person name="Wang W."/>
            <person name="Wang J."/>
            <person name="Qian W."/>
            <person name="Li D."/>
            <person name="Wang L."/>
        </authorList>
    </citation>
    <scope>NUCLEOTIDE SEQUENCE [LARGE SCALE GENOMIC DNA]</scope>
    <source>
        <strain>ATCC 39541 / Classical Ogawa 395 / O395</strain>
    </source>
</reference>
<comment type="function">
    <text evidence="1">Binds together with bS18 to 16S ribosomal RNA.</text>
</comment>
<comment type="similarity">
    <text evidence="1">Belongs to the bacterial ribosomal protein bS6 family.</text>
</comment>
<sequence length="122" mass="14249">MRHYEIVFMVHPDQSEQVAGMIERYTGSITEAGGKIHRLEDWGRRQLAYPINKLHKAHYVLMNVEADQAVVDELETAFRFNDAVLRNMIMRTKAAITEPSIMLKAREERVKRDEMKFDADVE</sequence>
<accession>A5F3K3</accession>
<accession>C3M4G0</accession>
<name>RS6_VIBC3</name>
<evidence type="ECO:0000255" key="1">
    <source>
        <dbReference type="HAMAP-Rule" id="MF_00360"/>
    </source>
</evidence>
<evidence type="ECO:0000305" key="2"/>
<keyword id="KW-0687">Ribonucleoprotein</keyword>
<keyword id="KW-0689">Ribosomal protein</keyword>
<keyword id="KW-0694">RNA-binding</keyword>
<keyword id="KW-0699">rRNA-binding</keyword>
<dbReference type="EMBL" id="CP000627">
    <property type="protein sequence ID" value="ABQ21871.1"/>
    <property type="molecule type" value="Genomic_DNA"/>
</dbReference>
<dbReference type="EMBL" id="CP001235">
    <property type="protein sequence ID" value="ACP08432.1"/>
    <property type="molecule type" value="Genomic_DNA"/>
</dbReference>
<dbReference type="RefSeq" id="WP_001216668.1">
    <property type="nucleotide sequence ID" value="NZ_JAACZH010000040.1"/>
</dbReference>
<dbReference type="SMR" id="A5F3K3"/>
<dbReference type="GeneID" id="88783679"/>
<dbReference type="KEGG" id="vco:VC0395_A2777"/>
<dbReference type="KEGG" id="vcr:VC395_0409"/>
<dbReference type="PATRIC" id="fig|345073.21.peg.397"/>
<dbReference type="eggNOG" id="COG0360">
    <property type="taxonomic scope" value="Bacteria"/>
</dbReference>
<dbReference type="HOGENOM" id="CLU_113441_6_1_6"/>
<dbReference type="OrthoDB" id="9812702at2"/>
<dbReference type="Proteomes" id="UP000000249">
    <property type="component" value="Chromosome 2"/>
</dbReference>
<dbReference type="GO" id="GO:0022627">
    <property type="term" value="C:cytosolic small ribosomal subunit"/>
    <property type="evidence" value="ECO:0007669"/>
    <property type="project" value="TreeGrafter"/>
</dbReference>
<dbReference type="GO" id="GO:0070181">
    <property type="term" value="F:small ribosomal subunit rRNA binding"/>
    <property type="evidence" value="ECO:0007669"/>
    <property type="project" value="TreeGrafter"/>
</dbReference>
<dbReference type="GO" id="GO:0003735">
    <property type="term" value="F:structural constituent of ribosome"/>
    <property type="evidence" value="ECO:0007669"/>
    <property type="project" value="InterPro"/>
</dbReference>
<dbReference type="GO" id="GO:0006412">
    <property type="term" value="P:translation"/>
    <property type="evidence" value="ECO:0007669"/>
    <property type="project" value="UniProtKB-UniRule"/>
</dbReference>
<dbReference type="CDD" id="cd00473">
    <property type="entry name" value="bS6"/>
    <property type="match status" value="1"/>
</dbReference>
<dbReference type="FunFam" id="3.30.70.60:FF:000003">
    <property type="entry name" value="30S ribosomal protein S6"/>
    <property type="match status" value="1"/>
</dbReference>
<dbReference type="Gene3D" id="3.30.70.60">
    <property type="match status" value="1"/>
</dbReference>
<dbReference type="HAMAP" id="MF_00360">
    <property type="entry name" value="Ribosomal_bS6"/>
    <property type="match status" value="1"/>
</dbReference>
<dbReference type="InterPro" id="IPR000529">
    <property type="entry name" value="Ribosomal_bS6"/>
</dbReference>
<dbReference type="InterPro" id="IPR020815">
    <property type="entry name" value="Ribosomal_bS6_CS"/>
</dbReference>
<dbReference type="InterPro" id="IPR035980">
    <property type="entry name" value="Ribosomal_bS6_sf"/>
</dbReference>
<dbReference type="InterPro" id="IPR020814">
    <property type="entry name" value="Ribosomal_S6_plastid/chlpt"/>
</dbReference>
<dbReference type="InterPro" id="IPR014717">
    <property type="entry name" value="Transl_elong_EF1B/ribsomal_bS6"/>
</dbReference>
<dbReference type="NCBIfam" id="TIGR00166">
    <property type="entry name" value="S6"/>
    <property type="match status" value="1"/>
</dbReference>
<dbReference type="PANTHER" id="PTHR21011">
    <property type="entry name" value="MITOCHONDRIAL 28S RIBOSOMAL PROTEIN S6"/>
    <property type="match status" value="1"/>
</dbReference>
<dbReference type="PANTHER" id="PTHR21011:SF1">
    <property type="entry name" value="SMALL RIBOSOMAL SUBUNIT PROTEIN BS6M"/>
    <property type="match status" value="1"/>
</dbReference>
<dbReference type="Pfam" id="PF01250">
    <property type="entry name" value="Ribosomal_S6"/>
    <property type="match status" value="1"/>
</dbReference>
<dbReference type="SUPFAM" id="SSF54995">
    <property type="entry name" value="Ribosomal protein S6"/>
    <property type="match status" value="1"/>
</dbReference>
<dbReference type="PROSITE" id="PS01048">
    <property type="entry name" value="RIBOSOMAL_S6"/>
    <property type="match status" value="1"/>
</dbReference>
<gene>
    <name evidence="1" type="primary">rpsF</name>
    <name type="ordered locus">VC0395_A2777</name>
    <name type="ordered locus">VC395_0409</name>
</gene>
<feature type="chain" id="PRO_1000079476" description="Small ribosomal subunit protein bS6">
    <location>
        <begin position="1"/>
        <end position="122"/>
    </location>
</feature>